<accession>A9R0I6</accession>
<gene>
    <name type="ordered locus">YpAngola_A2819</name>
</gene>
<reference key="1">
    <citation type="journal article" date="2010" name="J. Bacteriol.">
        <title>Genome sequence of the deep-rooted Yersinia pestis strain Angola reveals new insights into the evolution and pangenome of the plague bacterium.</title>
        <authorList>
            <person name="Eppinger M."/>
            <person name="Worsham P.L."/>
            <person name="Nikolich M.P."/>
            <person name="Riley D.R."/>
            <person name="Sebastian Y."/>
            <person name="Mou S."/>
            <person name="Achtman M."/>
            <person name="Lindler L.E."/>
            <person name="Ravel J."/>
        </authorList>
    </citation>
    <scope>NUCLEOTIDE SEQUENCE [LARGE SCALE GENOMIC DNA]</scope>
    <source>
        <strain>Angola</strain>
    </source>
</reference>
<proteinExistence type="inferred from homology"/>
<protein>
    <recommendedName>
        <fullName evidence="1">UPF0227 protein YpAngola_A2819</fullName>
    </recommendedName>
</protein>
<sequence>MIVYLHGFDSNSPGNHEKVLQLQFIDPDVRFISYSTLHPRHDMQYLLKEVDKAIQQGGDEKSLICGVGLGGFWAERIGFLCGIRQVAFNPNLYPQENMSGKIDRPEEYIDIASKCIDGFREKNRDRCLVVLSRHDEMLDSQRTAGDLHPYYEIVWDDKQNHKFKDLSPHLQRIKAFKTLG</sequence>
<dbReference type="EMBL" id="CP000901">
    <property type="protein sequence ID" value="ABX85152.1"/>
    <property type="molecule type" value="Genomic_DNA"/>
</dbReference>
<dbReference type="SMR" id="A9R0I6"/>
<dbReference type="ESTHER" id="yerpe-y1616">
    <property type="family name" value="abh_upf00227"/>
</dbReference>
<dbReference type="KEGG" id="ypg:YpAngola_A2819"/>
<dbReference type="PATRIC" id="fig|349746.12.peg.3853"/>
<dbReference type="Gene3D" id="3.40.50.1820">
    <property type="entry name" value="alpha/beta hydrolase"/>
    <property type="match status" value="1"/>
</dbReference>
<dbReference type="HAMAP" id="MF_01047">
    <property type="entry name" value="UPF0227"/>
    <property type="match status" value="1"/>
</dbReference>
<dbReference type="InterPro" id="IPR029058">
    <property type="entry name" value="AB_hydrolase_fold"/>
</dbReference>
<dbReference type="InterPro" id="IPR022987">
    <property type="entry name" value="UPF0227"/>
</dbReference>
<dbReference type="InterPro" id="IPR008886">
    <property type="entry name" value="UPF0227/Esterase_YqiA"/>
</dbReference>
<dbReference type="NCBIfam" id="NF003431">
    <property type="entry name" value="PRK04940.1"/>
    <property type="match status" value="1"/>
</dbReference>
<dbReference type="PANTHER" id="PTHR35602">
    <property type="entry name" value="ESTERASE YQIA-RELATED"/>
    <property type="match status" value="1"/>
</dbReference>
<dbReference type="PANTHER" id="PTHR35602:SF2">
    <property type="entry name" value="UPF0227 PROTEIN YCFP"/>
    <property type="match status" value="1"/>
</dbReference>
<dbReference type="Pfam" id="PF05728">
    <property type="entry name" value="UPF0227"/>
    <property type="match status" value="1"/>
</dbReference>
<dbReference type="SUPFAM" id="SSF53474">
    <property type="entry name" value="alpha/beta-Hydrolases"/>
    <property type="match status" value="1"/>
</dbReference>
<feature type="chain" id="PRO_1000136205" description="UPF0227 protein YpAngola_A2819">
    <location>
        <begin position="1"/>
        <end position="180"/>
    </location>
</feature>
<organism>
    <name type="scientific">Yersinia pestis bv. Antiqua (strain Angola)</name>
    <dbReference type="NCBI Taxonomy" id="349746"/>
    <lineage>
        <taxon>Bacteria</taxon>
        <taxon>Pseudomonadati</taxon>
        <taxon>Pseudomonadota</taxon>
        <taxon>Gammaproteobacteria</taxon>
        <taxon>Enterobacterales</taxon>
        <taxon>Yersiniaceae</taxon>
        <taxon>Yersinia</taxon>
    </lineage>
</organism>
<evidence type="ECO:0000255" key="1">
    <source>
        <dbReference type="HAMAP-Rule" id="MF_01047"/>
    </source>
</evidence>
<name>Y2819_YERPG</name>
<comment type="similarity">
    <text evidence="1">Belongs to the UPF0227 family.</text>
</comment>